<gene>
    <name evidence="7" type="primary">EPI10</name>
    <name type="ORF">PITG_12129</name>
</gene>
<protein>
    <recommendedName>
        <fullName evidence="7">Extracellular protease inhibitor 10</fullName>
    </recommendedName>
    <alternativeName>
        <fullName evidence="7">Secreted effector EPI10</fullName>
    </alternativeName>
</protein>
<feature type="signal peptide" evidence="1">
    <location>
        <begin position="1"/>
        <end position="22"/>
    </location>
</feature>
<feature type="chain" id="PRO_5003012102" description="Extracellular protease inhibitor 10">
    <location>
        <begin position="23"/>
        <end position="228"/>
    </location>
</feature>
<feature type="domain" description="Kazal-like 1" evidence="3">
    <location>
        <begin position="23"/>
        <end position="72"/>
    </location>
</feature>
<feature type="domain" description="Kazal-like 2" evidence="3">
    <location>
        <begin position="90"/>
        <end position="127"/>
    </location>
</feature>
<feature type="domain" description="Kazal-like 3" evidence="3">
    <location>
        <begin position="156"/>
        <end position="208"/>
    </location>
</feature>
<feature type="region of interest" description="Disordered" evidence="4">
    <location>
        <begin position="69"/>
        <end position="92"/>
    </location>
</feature>
<feature type="compositionally biased region" description="Low complexity" evidence="4">
    <location>
        <begin position="71"/>
        <end position="92"/>
    </location>
</feature>
<feature type="site" description="Reactive bond" evidence="3">
    <location>
        <begin position="32"/>
        <end position="33"/>
    </location>
</feature>
<feature type="site" description="Reactive bond" evidence="3">
    <location>
        <begin position="102"/>
        <end position="103"/>
    </location>
</feature>
<feature type="site" description="Reactive bond" evidence="3">
    <location>
        <begin position="169"/>
        <end position="170"/>
    </location>
</feature>
<feature type="glycosylation site" description="N-linked (GlcNAc...) asparagine" evidence="2">
    <location>
        <position position="25"/>
    </location>
</feature>
<feature type="glycosylation site" description="N-linked (GlcNAc...) asparagine" evidence="2">
    <location>
        <position position="199"/>
    </location>
</feature>
<feature type="disulfide bond" evidence="3">
    <location>
        <begin position="26"/>
        <end position="56"/>
    </location>
</feature>
<feature type="disulfide bond" evidence="3">
    <location>
        <begin position="30"/>
        <end position="49"/>
    </location>
</feature>
<feature type="disulfide bond" evidence="3">
    <location>
        <begin position="38"/>
        <end position="70"/>
    </location>
</feature>
<feature type="disulfide bond" evidence="3">
    <location>
        <begin position="96"/>
        <end position="126"/>
    </location>
</feature>
<feature type="disulfide bond" evidence="3">
    <location>
        <begin position="100"/>
        <end position="119"/>
    </location>
</feature>
<feature type="disulfide bond" evidence="3">
    <location>
        <begin position="162"/>
        <end position="193"/>
    </location>
</feature>
<feature type="disulfide bond" evidence="3">
    <location>
        <begin position="167"/>
        <end position="186"/>
    </location>
</feature>
<keyword id="KW-1015">Disulfide bond</keyword>
<keyword id="KW-0325">Glycoprotein</keyword>
<keyword id="KW-0646">Protease inhibitor</keyword>
<keyword id="KW-1185">Reference proteome</keyword>
<keyword id="KW-0677">Repeat</keyword>
<keyword id="KW-0964">Secreted</keyword>
<keyword id="KW-0722">Serine protease inhibitor</keyword>
<keyword id="KW-0732">Signal</keyword>
<keyword id="KW-0843">Virulence</keyword>
<sequence>MKSAFTLSLALVAVTATISAAADDNCSFGCLDVYKPVCGSNGETYSNSCYLRLASCKSNNGITEAGDGECASTPASSATPSPVTSSTGSTSGTVGCPDMCLDVYDPVSDENGKEYSNQCYMEMAKCKGTGYDDNKRSGNPGISTLDAERKLAFAPGYQGPPCGDMLCPDNYAPVCGSDGETYPNECDLGITSCNHPEQNITMVGEGTLPVTGAATATATATAEVVTRW</sequence>
<name>EPI10_PHYIT</name>
<accession>D0NJ41</accession>
<comment type="function">
    <text evidence="6">Secreted effector that interacts with and inhibits the pathogenesis-related P69B subtilisin-like serine protease of host tomato (PubMed:15980196). Inhibition of host proteases by a pathogen extracellular protease inhibitor forms a specific type of defense-counterdefense mechanism between plants and microbial pathogens (PubMed:15980196).</text>
</comment>
<comment type="subunit">
    <text evidence="6">Interacts with host subtilisin-like protease P69B.</text>
</comment>
<comment type="subcellular location">
    <subcellularLocation>
        <location evidence="6">Secreted</location>
    </subcellularLocation>
    <text evidence="6">Localizes to host apoplast where it targets defense proteases for inhibition.</text>
</comment>
<comment type="induction">
    <text evidence="5 6">Expressed in zoospores (PubMed:15096512). Expressed during host infection (PubMed:15980196).</text>
</comment>
<dbReference type="EMBL" id="DS028141">
    <property type="protein sequence ID" value="EEY59559.1"/>
    <property type="molecule type" value="Genomic_DNA"/>
</dbReference>
<dbReference type="RefSeq" id="XP_002900752.1">
    <property type="nucleotide sequence ID" value="XM_002900706.1"/>
</dbReference>
<dbReference type="SMR" id="D0NJ41"/>
<dbReference type="STRING" id="403677.D0NJ41"/>
<dbReference type="MEROPS" id="I01.965"/>
<dbReference type="GlyCosmos" id="D0NJ41">
    <property type="glycosylation" value="2 sites, No reported glycans"/>
</dbReference>
<dbReference type="EnsemblProtists" id="PITG_12129T0">
    <property type="protein sequence ID" value="PITG_12129T0"/>
    <property type="gene ID" value="PITG_12129"/>
</dbReference>
<dbReference type="GeneID" id="9473138"/>
<dbReference type="KEGG" id="pif:PITG_12129"/>
<dbReference type="VEuPathDB" id="FungiDB:PITG_12129"/>
<dbReference type="eggNOG" id="KOG3649">
    <property type="taxonomic scope" value="Eukaryota"/>
</dbReference>
<dbReference type="HOGENOM" id="CLU_057241_1_0_1"/>
<dbReference type="InParanoid" id="D0NJ41"/>
<dbReference type="OMA" id="LCGSDNT"/>
<dbReference type="OrthoDB" id="126772at2759"/>
<dbReference type="Proteomes" id="UP000006643">
    <property type="component" value="Partially assembled WGS sequence"/>
</dbReference>
<dbReference type="GO" id="GO:0005576">
    <property type="term" value="C:extracellular region"/>
    <property type="evidence" value="ECO:0007669"/>
    <property type="project" value="UniProtKB-SubCell"/>
</dbReference>
<dbReference type="GO" id="GO:0030414">
    <property type="term" value="F:peptidase inhibitor activity"/>
    <property type="evidence" value="ECO:0000314"/>
    <property type="project" value="UniProtKB"/>
</dbReference>
<dbReference type="GO" id="GO:0004867">
    <property type="term" value="F:serine-type endopeptidase inhibitor activity"/>
    <property type="evidence" value="ECO:0007669"/>
    <property type="project" value="UniProtKB-KW"/>
</dbReference>
<dbReference type="CDD" id="cd00104">
    <property type="entry name" value="KAZAL_FS"/>
    <property type="match status" value="3"/>
</dbReference>
<dbReference type="Gene3D" id="3.30.60.30">
    <property type="match status" value="3"/>
</dbReference>
<dbReference type="InterPro" id="IPR002350">
    <property type="entry name" value="Kazal_dom"/>
</dbReference>
<dbReference type="InterPro" id="IPR036058">
    <property type="entry name" value="Kazal_dom_sf"/>
</dbReference>
<dbReference type="InterPro" id="IPR050653">
    <property type="entry name" value="Prot_Inhib_GrowthFact_Antg"/>
</dbReference>
<dbReference type="PANTHER" id="PTHR10913:SF45">
    <property type="entry name" value="FOLLISTATIN, ISOFORM A-RELATED"/>
    <property type="match status" value="1"/>
</dbReference>
<dbReference type="PANTHER" id="PTHR10913">
    <property type="entry name" value="FOLLISTATIN-RELATED"/>
    <property type="match status" value="1"/>
</dbReference>
<dbReference type="Pfam" id="PF00050">
    <property type="entry name" value="Kazal_1"/>
    <property type="match status" value="1"/>
</dbReference>
<dbReference type="Pfam" id="PF07648">
    <property type="entry name" value="Kazal_2"/>
    <property type="match status" value="2"/>
</dbReference>
<dbReference type="SMART" id="SM00280">
    <property type="entry name" value="KAZAL"/>
    <property type="match status" value="3"/>
</dbReference>
<dbReference type="SUPFAM" id="SSF100895">
    <property type="entry name" value="Kazal-type serine protease inhibitors"/>
    <property type="match status" value="3"/>
</dbReference>
<dbReference type="PROSITE" id="PS51465">
    <property type="entry name" value="KAZAL_2"/>
    <property type="match status" value="3"/>
</dbReference>
<evidence type="ECO:0000255" key="1"/>
<evidence type="ECO:0000255" key="2">
    <source>
        <dbReference type="PROSITE-ProRule" id="PRU00498"/>
    </source>
</evidence>
<evidence type="ECO:0000255" key="3">
    <source>
        <dbReference type="PROSITE-ProRule" id="PRU00798"/>
    </source>
</evidence>
<evidence type="ECO:0000256" key="4">
    <source>
        <dbReference type="SAM" id="MobiDB-lite"/>
    </source>
</evidence>
<evidence type="ECO:0000269" key="5">
    <source>
    </source>
</evidence>
<evidence type="ECO:0000269" key="6">
    <source>
    </source>
</evidence>
<evidence type="ECO:0000303" key="7">
    <source>
    </source>
</evidence>
<organism>
    <name type="scientific">Phytophthora infestans (strain T30-4)</name>
    <name type="common">Potato late blight agent</name>
    <dbReference type="NCBI Taxonomy" id="403677"/>
    <lineage>
        <taxon>Eukaryota</taxon>
        <taxon>Sar</taxon>
        <taxon>Stramenopiles</taxon>
        <taxon>Oomycota</taxon>
        <taxon>Peronosporales</taxon>
        <taxon>Peronosporaceae</taxon>
        <taxon>Phytophthora</taxon>
    </lineage>
</organism>
<proteinExistence type="evidence at protein level"/>
<reference key="1">
    <citation type="journal article" date="2009" name="Nature">
        <title>Genome sequence and analysis of the Irish potato famine pathogen Phytophthora infestans.</title>
        <authorList>
            <consortium name="The Broad Institute Genome Sequencing Platform"/>
            <person name="Haas B.J."/>
            <person name="Kamoun S."/>
            <person name="Zody M.C."/>
            <person name="Jiang R.H."/>
            <person name="Handsaker R.E."/>
            <person name="Cano L.M."/>
            <person name="Grabherr M."/>
            <person name="Kodira C.D."/>
            <person name="Raffaele S."/>
            <person name="Torto-Alalibo T."/>
            <person name="Bozkurt T.O."/>
            <person name="Ah-Fong A.M."/>
            <person name="Alvarado L."/>
            <person name="Anderson V.L."/>
            <person name="Armstrong M.R."/>
            <person name="Avrova A."/>
            <person name="Baxter L."/>
            <person name="Beynon J."/>
            <person name="Boevink P.C."/>
            <person name="Bollmann S.R."/>
            <person name="Bos J.I."/>
            <person name="Bulone V."/>
            <person name="Cai G."/>
            <person name="Cakir C."/>
            <person name="Carrington J.C."/>
            <person name="Chawner M."/>
            <person name="Conti L."/>
            <person name="Costanzo S."/>
            <person name="Ewan R."/>
            <person name="Fahlgren N."/>
            <person name="Fischbach M.A."/>
            <person name="Fugelstad J."/>
            <person name="Gilroy E.M."/>
            <person name="Gnerre S."/>
            <person name="Green P.J."/>
            <person name="Grenville-Briggs L.J."/>
            <person name="Griffith J."/>
            <person name="Grunwald N.J."/>
            <person name="Horn K."/>
            <person name="Horner N.R."/>
            <person name="Hu C.H."/>
            <person name="Huitema E."/>
            <person name="Jeong D.H."/>
            <person name="Jones A.M."/>
            <person name="Jones J.D."/>
            <person name="Jones R.W."/>
            <person name="Karlsson E.K."/>
            <person name="Kunjeti S.G."/>
            <person name="Lamour K."/>
            <person name="Liu Z."/>
            <person name="Ma L."/>
            <person name="Maclean D."/>
            <person name="Chibucos M.C."/>
            <person name="McDonald H."/>
            <person name="McWalters J."/>
            <person name="Meijer H.J."/>
            <person name="Morgan W."/>
            <person name="Morris P.F."/>
            <person name="Munro C.A."/>
            <person name="O'Neill K."/>
            <person name="Ospina-Giraldo M."/>
            <person name="Pinzon A."/>
            <person name="Pritchard L."/>
            <person name="Ramsahoye B."/>
            <person name="Ren Q."/>
            <person name="Restrepo S."/>
            <person name="Roy S."/>
            <person name="Sadanandom A."/>
            <person name="Savidor A."/>
            <person name="Schornack S."/>
            <person name="Schwartz D.C."/>
            <person name="Schumann U.D."/>
            <person name="Schwessinger B."/>
            <person name="Seyer L."/>
            <person name="Sharpe T."/>
            <person name="Silvar C."/>
            <person name="Song J."/>
            <person name="Studholme D.J."/>
            <person name="Sykes S."/>
            <person name="Thines M."/>
            <person name="van de Vondervoort P.J."/>
            <person name="Phuntumart V."/>
            <person name="Wawra S."/>
            <person name="Weide R."/>
            <person name="Win J."/>
            <person name="Young C."/>
            <person name="Zhou S."/>
            <person name="Fry W."/>
            <person name="Meyers B.C."/>
            <person name="van West P."/>
            <person name="Ristaino J."/>
            <person name="Govers F."/>
            <person name="Birch P.R."/>
            <person name="Whisson S.C."/>
            <person name="Judelson H.S."/>
            <person name="Nusbaum C."/>
        </authorList>
    </citation>
    <scope>NUCLEOTIDE SEQUENCE [LARGE SCALE GENOMIC DNA]</scope>
    <source>
        <strain>T30-4</strain>
    </source>
</reference>
<reference key="2">
    <citation type="journal article" date="2004" name="J. Biol. Chem.">
        <title>A Kazal-like extracellular serine protease inhibitor from Phytophthora infestans targets the tomato pathogenesis-related protease P69B.</title>
        <authorList>
            <person name="Tian M."/>
            <person name="Huitema E."/>
            <person name="Da Cunha L."/>
            <person name="Torto-Alalibo T."/>
            <person name="Kamoun S."/>
        </authorList>
    </citation>
    <scope>IDENTIFICATION</scope>
    <scope>INDUCTION</scope>
</reference>
<reference key="3">
    <citation type="journal article" date="2005" name="Plant Physiol.">
        <title>A Second Kazal-like protease inhibitor from Phytophthora infestans inhibits and interacts with the apoplastic pathogenesis-related protease P69B of tomato.</title>
        <authorList>
            <person name="Tian M."/>
            <person name="Benedetti B."/>
            <person name="Kamoun S."/>
        </authorList>
    </citation>
    <scope>FUNCTION</scope>
    <scope>SUBCELLULAR LOCATION</scope>
    <scope>INTERACTION WITH HOST P69B</scope>
    <scope>INDUCTION</scope>
</reference>